<feature type="chain" id="PRO_0000097933" description="Sec-independent protein translocase protein TatA">
    <location>
        <begin position="1"/>
        <end position="105"/>
    </location>
</feature>
<feature type="transmembrane region" description="Helical" evidence="1">
    <location>
        <begin position="1"/>
        <end position="21"/>
    </location>
</feature>
<feature type="region of interest" description="Disordered" evidence="2">
    <location>
        <begin position="41"/>
        <end position="105"/>
    </location>
</feature>
<feature type="compositionally biased region" description="Basic and acidic residues" evidence="2">
    <location>
        <begin position="41"/>
        <end position="50"/>
    </location>
</feature>
<feature type="compositionally biased region" description="Low complexity" evidence="2">
    <location>
        <begin position="52"/>
        <end position="92"/>
    </location>
</feature>
<feature type="compositionally biased region" description="Basic and acidic residues" evidence="2">
    <location>
        <begin position="96"/>
        <end position="105"/>
    </location>
</feature>
<proteinExistence type="inferred from homology"/>
<gene>
    <name evidence="1" type="primary">tatA</name>
    <name type="synonym">tatX</name>
    <name type="ordered locus">Cgl1491</name>
    <name type="ordered locus">cg1685</name>
</gene>
<sequence>MSLGPWEIGIIVLLIIVLFGAKKLPDAARSIGRSMRIFKSEVKEMNKDGDTPEQQQQPQQQIAPNQIEAPQPNFEQHYQGQQVQQPQNPQTPDYRQNYEDPNRTS</sequence>
<accession>Q8NQE4</accession>
<dbReference type="EMBL" id="BA000036">
    <property type="protein sequence ID" value="BAB98884.1"/>
    <property type="molecule type" value="Genomic_DNA"/>
</dbReference>
<dbReference type="EMBL" id="BX927152">
    <property type="protein sequence ID" value="CAF21499.1"/>
    <property type="molecule type" value="Genomic_DNA"/>
</dbReference>
<dbReference type="RefSeq" id="NP_600707.1">
    <property type="nucleotide sequence ID" value="NC_003450.3"/>
</dbReference>
<dbReference type="RefSeq" id="WP_011014401.1">
    <property type="nucleotide sequence ID" value="NC_006958.1"/>
</dbReference>
<dbReference type="SMR" id="Q8NQE4"/>
<dbReference type="STRING" id="196627.cg1685"/>
<dbReference type="GeneID" id="1019464"/>
<dbReference type="KEGG" id="cgb:cg1685"/>
<dbReference type="KEGG" id="cgl:Cgl1491"/>
<dbReference type="PATRIC" id="fig|196627.13.peg.1458"/>
<dbReference type="eggNOG" id="COG1826">
    <property type="taxonomic scope" value="Bacteria"/>
</dbReference>
<dbReference type="HOGENOM" id="CLU_086034_4_0_11"/>
<dbReference type="OrthoDB" id="5245163at2"/>
<dbReference type="BioCyc" id="CORYNE:G18NG-11074-MONOMER"/>
<dbReference type="Proteomes" id="UP000000582">
    <property type="component" value="Chromosome"/>
</dbReference>
<dbReference type="Proteomes" id="UP000001009">
    <property type="component" value="Chromosome"/>
</dbReference>
<dbReference type="GO" id="GO:0033281">
    <property type="term" value="C:TAT protein transport complex"/>
    <property type="evidence" value="ECO:0007669"/>
    <property type="project" value="UniProtKB-UniRule"/>
</dbReference>
<dbReference type="GO" id="GO:0008320">
    <property type="term" value="F:protein transmembrane transporter activity"/>
    <property type="evidence" value="ECO:0007669"/>
    <property type="project" value="UniProtKB-UniRule"/>
</dbReference>
<dbReference type="GO" id="GO:0043953">
    <property type="term" value="P:protein transport by the Tat complex"/>
    <property type="evidence" value="ECO:0007669"/>
    <property type="project" value="UniProtKB-UniRule"/>
</dbReference>
<dbReference type="Gene3D" id="1.20.5.3310">
    <property type="match status" value="1"/>
</dbReference>
<dbReference type="HAMAP" id="MF_00236">
    <property type="entry name" value="TatA_E"/>
    <property type="match status" value="1"/>
</dbReference>
<dbReference type="InterPro" id="IPR003369">
    <property type="entry name" value="TatA/B/E"/>
</dbReference>
<dbReference type="InterPro" id="IPR006312">
    <property type="entry name" value="TatA/E"/>
</dbReference>
<dbReference type="NCBIfam" id="NF001854">
    <property type="entry name" value="PRK00575.1"/>
    <property type="match status" value="1"/>
</dbReference>
<dbReference type="NCBIfam" id="TIGR01411">
    <property type="entry name" value="tatAE"/>
    <property type="match status" value="1"/>
</dbReference>
<dbReference type="PANTHER" id="PTHR42982">
    <property type="entry name" value="SEC-INDEPENDENT PROTEIN TRANSLOCASE PROTEIN TATA"/>
    <property type="match status" value="1"/>
</dbReference>
<dbReference type="PANTHER" id="PTHR42982:SF8">
    <property type="entry name" value="SEC-INDEPENDENT PROTEIN TRANSLOCASE PROTEIN TATA"/>
    <property type="match status" value="1"/>
</dbReference>
<dbReference type="Pfam" id="PF02416">
    <property type="entry name" value="TatA_B_E"/>
    <property type="match status" value="1"/>
</dbReference>
<evidence type="ECO:0000255" key="1">
    <source>
        <dbReference type="HAMAP-Rule" id="MF_00236"/>
    </source>
</evidence>
<evidence type="ECO:0000256" key="2">
    <source>
        <dbReference type="SAM" id="MobiDB-lite"/>
    </source>
</evidence>
<keyword id="KW-1003">Cell membrane</keyword>
<keyword id="KW-0472">Membrane</keyword>
<keyword id="KW-0653">Protein transport</keyword>
<keyword id="KW-1185">Reference proteome</keyword>
<keyword id="KW-0811">Translocation</keyword>
<keyword id="KW-0812">Transmembrane</keyword>
<keyword id="KW-1133">Transmembrane helix</keyword>
<keyword id="KW-0813">Transport</keyword>
<reference key="1">
    <citation type="journal article" date="2003" name="Appl. Microbiol. Biotechnol.">
        <title>The Corynebacterium glutamicum genome: features and impacts on biotechnological processes.</title>
        <authorList>
            <person name="Ikeda M."/>
            <person name="Nakagawa S."/>
        </authorList>
    </citation>
    <scope>NUCLEOTIDE SEQUENCE [LARGE SCALE GENOMIC DNA]</scope>
    <source>
        <strain>ATCC 13032 / DSM 20300 / JCM 1318 / BCRC 11384 / CCUG 27702 / LMG 3730 / NBRC 12168 / NCIMB 10025 / NRRL B-2784 / 534</strain>
    </source>
</reference>
<reference key="2">
    <citation type="journal article" date="2003" name="J. Biotechnol.">
        <title>The complete Corynebacterium glutamicum ATCC 13032 genome sequence and its impact on the production of L-aspartate-derived amino acids and vitamins.</title>
        <authorList>
            <person name="Kalinowski J."/>
            <person name="Bathe B."/>
            <person name="Bartels D."/>
            <person name="Bischoff N."/>
            <person name="Bott M."/>
            <person name="Burkovski A."/>
            <person name="Dusch N."/>
            <person name="Eggeling L."/>
            <person name="Eikmanns B.J."/>
            <person name="Gaigalat L."/>
            <person name="Goesmann A."/>
            <person name="Hartmann M."/>
            <person name="Huthmacher K."/>
            <person name="Kraemer R."/>
            <person name="Linke B."/>
            <person name="McHardy A.C."/>
            <person name="Meyer F."/>
            <person name="Moeckel B."/>
            <person name="Pfefferle W."/>
            <person name="Puehler A."/>
            <person name="Rey D.A."/>
            <person name="Rueckert C."/>
            <person name="Rupp O."/>
            <person name="Sahm H."/>
            <person name="Wendisch V.F."/>
            <person name="Wiegraebe I."/>
            <person name="Tauch A."/>
        </authorList>
    </citation>
    <scope>NUCLEOTIDE SEQUENCE [LARGE SCALE GENOMIC DNA]</scope>
    <source>
        <strain>ATCC 13032 / DSM 20300 / JCM 1318 / BCRC 11384 / CCUG 27702 / LMG 3730 / NBRC 12168 / NCIMB 10025 / NRRL B-2784 / 534</strain>
    </source>
</reference>
<name>TATA_CORGL</name>
<comment type="function">
    <text evidence="1">Part of the twin-arginine translocation (Tat) system that transports large folded proteins containing a characteristic twin-arginine motif in their signal peptide across membranes. TatA could form the protein-conducting channel of the Tat system.</text>
</comment>
<comment type="subunit">
    <text evidence="1">The Tat system comprises two distinct complexes: a TatABC complex, containing multiple copies of TatA, TatB and TatC subunits, and a separate TatA complex, containing only TatA subunits. Substrates initially bind to the TatABC complex, which probably triggers association of the separate TatA complex to form the active translocon.</text>
</comment>
<comment type="subcellular location">
    <subcellularLocation>
        <location evidence="1">Cell membrane</location>
        <topology evidence="1">Single-pass membrane protein</topology>
    </subcellularLocation>
</comment>
<comment type="similarity">
    <text evidence="1">Belongs to the TatA/E family.</text>
</comment>
<organism>
    <name type="scientific">Corynebacterium glutamicum (strain ATCC 13032 / DSM 20300 / JCM 1318 / BCRC 11384 / CCUG 27702 / LMG 3730 / NBRC 12168 / NCIMB 10025 / NRRL B-2784 / 534)</name>
    <dbReference type="NCBI Taxonomy" id="196627"/>
    <lineage>
        <taxon>Bacteria</taxon>
        <taxon>Bacillati</taxon>
        <taxon>Actinomycetota</taxon>
        <taxon>Actinomycetes</taxon>
        <taxon>Mycobacteriales</taxon>
        <taxon>Corynebacteriaceae</taxon>
        <taxon>Corynebacterium</taxon>
    </lineage>
</organism>
<protein>
    <recommendedName>
        <fullName evidence="1">Sec-independent protein translocase protein TatA</fullName>
    </recommendedName>
</protein>